<protein>
    <recommendedName>
        <fullName>Alanine dehydrogenase 1</fullName>
        <ecNumber>1.4.1.1</ecNumber>
    </recommendedName>
</protein>
<evidence type="ECO:0000250" key="1"/>
<evidence type="ECO:0000255" key="2"/>
<evidence type="ECO:0000305" key="3"/>
<keyword id="KW-0520">NAD</keyword>
<keyword id="KW-0560">Oxidoreductase</keyword>
<reference key="1">
    <citation type="journal article" date="2002" name="Lancet">
        <title>Genome and virulence determinants of high virulence community-acquired MRSA.</title>
        <authorList>
            <person name="Baba T."/>
            <person name="Takeuchi F."/>
            <person name="Kuroda M."/>
            <person name="Yuzawa H."/>
            <person name="Aoki K."/>
            <person name="Oguchi A."/>
            <person name="Nagai Y."/>
            <person name="Iwama N."/>
            <person name="Asano K."/>
            <person name="Naimi T."/>
            <person name="Kuroda H."/>
            <person name="Cui L."/>
            <person name="Yamamoto K."/>
            <person name="Hiramatsu K."/>
        </authorList>
    </citation>
    <scope>NUCLEOTIDE SEQUENCE [LARGE SCALE GENOMIC DNA]</scope>
    <source>
        <strain>MW2</strain>
    </source>
</reference>
<organism>
    <name type="scientific">Staphylococcus aureus (strain MW2)</name>
    <dbReference type="NCBI Taxonomy" id="196620"/>
    <lineage>
        <taxon>Bacteria</taxon>
        <taxon>Bacillati</taxon>
        <taxon>Bacillota</taxon>
        <taxon>Bacilli</taxon>
        <taxon>Bacillales</taxon>
        <taxon>Staphylococcaceae</taxon>
        <taxon>Staphylococcus</taxon>
    </lineage>
</organism>
<sequence length="372" mass="40234">MLVAVVKELKQGEGRVACTPENVRKLTDAGHKVIVEKNAGIGSGFSNDMYEKEGAKIVTHEQAWEADLVIKVKEPHESEYQYFKKNQIIWGFLHLASSKEIVEKMQEVGVTAISGETIIKNGKAELLAPMSAIAGQRSAIMGAYYSEAQHGGQGTLVTGVHENVDIPGSTYVIFGGGVAATNAANVALGLNAKVIIIELNDDRIKYLQDMYAEKDVTVVKSTPENLAEQIKKADVFISTILIPGAKPPKLVTREMVKSMKKGSVLIDIAIDQGGTIETIRPTTISDPVYEEEGVIHYGVPNQPGAVPRTSTMALAQGNIDYILEICDKGLEQAIKDNEALSTGVNIYQGQVTNQGLASSHDLDYKEILNVIE</sequence>
<comment type="function">
    <text evidence="1">May play a role in cell wall synthesis as L-alanine is an important constituent of the peptidoglycan layer.</text>
</comment>
<comment type="catalytic activity">
    <reaction>
        <text>L-alanine + NAD(+) + H2O = pyruvate + NH4(+) + NADH + H(+)</text>
        <dbReference type="Rhea" id="RHEA:18405"/>
        <dbReference type="ChEBI" id="CHEBI:15361"/>
        <dbReference type="ChEBI" id="CHEBI:15377"/>
        <dbReference type="ChEBI" id="CHEBI:15378"/>
        <dbReference type="ChEBI" id="CHEBI:28938"/>
        <dbReference type="ChEBI" id="CHEBI:57540"/>
        <dbReference type="ChEBI" id="CHEBI:57945"/>
        <dbReference type="ChEBI" id="CHEBI:57972"/>
        <dbReference type="EC" id="1.4.1.1"/>
    </reaction>
</comment>
<comment type="pathway">
    <text>Amino-acid degradation; L-alanine degradation via dehydrogenase pathway; NH(3) and pyruvate from L-alanine: step 1/1.</text>
</comment>
<comment type="similarity">
    <text evidence="3">Belongs to the AlaDH/PNT family.</text>
</comment>
<gene>
    <name type="primary">ald1</name>
    <name type="ordered locus">MW1328</name>
</gene>
<name>DHA1_STAAW</name>
<feature type="chain" id="PRO_0000199000" description="Alanine dehydrogenase 1">
    <location>
        <begin position="1"/>
        <end position="372"/>
    </location>
</feature>
<feature type="active site" evidence="2">
    <location>
        <position position="94"/>
    </location>
</feature>
<feature type="binding site" evidence="1">
    <location>
        <begin position="170"/>
        <end position="200"/>
    </location>
    <ligand>
        <name>NAD(+)</name>
        <dbReference type="ChEBI" id="CHEBI:57540"/>
    </ligand>
</feature>
<dbReference type="EC" id="1.4.1.1"/>
<dbReference type="EMBL" id="BA000033">
    <property type="protein sequence ID" value="BAB95193.1"/>
    <property type="molecule type" value="Genomic_DNA"/>
</dbReference>
<dbReference type="SMR" id="Q8NWQ3"/>
<dbReference type="KEGG" id="sam:MW1328"/>
<dbReference type="HOGENOM" id="CLU_003376_3_0_9"/>
<dbReference type="UniPathway" id="UPA00527">
    <property type="reaction ID" value="UER00585"/>
</dbReference>
<dbReference type="GO" id="GO:0005886">
    <property type="term" value="C:plasma membrane"/>
    <property type="evidence" value="ECO:0007669"/>
    <property type="project" value="TreeGrafter"/>
</dbReference>
<dbReference type="GO" id="GO:0000286">
    <property type="term" value="F:alanine dehydrogenase activity"/>
    <property type="evidence" value="ECO:0007669"/>
    <property type="project" value="UniProtKB-EC"/>
</dbReference>
<dbReference type="GO" id="GO:0042853">
    <property type="term" value="P:L-alanine catabolic process"/>
    <property type="evidence" value="ECO:0007669"/>
    <property type="project" value="UniProtKB-UniPathway"/>
</dbReference>
<dbReference type="CDD" id="cd05305">
    <property type="entry name" value="L-AlaDH"/>
    <property type="match status" value="1"/>
</dbReference>
<dbReference type="FunFam" id="3.40.50.720:FF:000433">
    <property type="entry name" value="Alanine dehydrogenase 1"/>
    <property type="match status" value="1"/>
</dbReference>
<dbReference type="Gene3D" id="3.40.50.720">
    <property type="entry name" value="NAD(P)-binding Rossmann-like Domain"/>
    <property type="match status" value="2"/>
</dbReference>
<dbReference type="InterPro" id="IPR008141">
    <property type="entry name" value="Ala_DH"/>
</dbReference>
<dbReference type="InterPro" id="IPR008143">
    <property type="entry name" value="Ala_DH/PNT_CS2"/>
</dbReference>
<dbReference type="InterPro" id="IPR008142">
    <property type="entry name" value="AlaDH/PNT_CS1"/>
</dbReference>
<dbReference type="InterPro" id="IPR007886">
    <property type="entry name" value="AlaDH/PNT_N"/>
</dbReference>
<dbReference type="InterPro" id="IPR007698">
    <property type="entry name" value="AlaDH/PNT_NAD(H)-bd"/>
</dbReference>
<dbReference type="InterPro" id="IPR036291">
    <property type="entry name" value="NAD(P)-bd_dom_sf"/>
</dbReference>
<dbReference type="NCBIfam" id="TIGR00518">
    <property type="entry name" value="alaDH"/>
    <property type="match status" value="1"/>
</dbReference>
<dbReference type="PANTHER" id="PTHR42795">
    <property type="entry name" value="ALANINE DEHYDROGENASE"/>
    <property type="match status" value="1"/>
</dbReference>
<dbReference type="PANTHER" id="PTHR42795:SF1">
    <property type="entry name" value="ALANINE DEHYDROGENASE"/>
    <property type="match status" value="1"/>
</dbReference>
<dbReference type="Pfam" id="PF01262">
    <property type="entry name" value="AlaDh_PNT_C"/>
    <property type="match status" value="1"/>
</dbReference>
<dbReference type="Pfam" id="PF05222">
    <property type="entry name" value="AlaDh_PNT_N"/>
    <property type="match status" value="1"/>
</dbReference>
<dbReference type="PIRSF" id="PIRSF000183">
    <property type="entry name" value="Alanine_dh"/>
    <property type="match status" value="1"/>
</dbReference>
<dbReference type="SMART" id="SM01002">
    <property type="entry name" value="AlaDh_PNT_C"/>
    <property type="match status" value="1"/>
</dbReference>
<dbReference type="SMART" id="SM01003">
    <property type="entry name" value="AlaDh_PNT_N"/>
    <property type="match status" value="1"/>
</dbReference>
<dbReference type="SUPFAM" id="SSF52283">
    <property type="entry name" value="Formate/glycerate dehydrogenase catalytic domain-like"/>
    <property type="match status" value="1"/>
</dbReference>
<dbReference type="SUPFAM" id="SSF51735">
    <property type="entry name" value="NAD(P)-binding Rossmann-fold domains"/>
    <property type="match status" value="1"/>
</dbReference>
<dbReference type="PROSITE" id="PS00836">
    <property type="entry name" value="ALADH_PNT_1"/>
    <property type="match status" value="1"/>
</dbReference>
<dbReference type="PROSITE" id="PS00837">
    <property type="entry name" value="ALADH_PNT_2"/>
    <property type="match status" value="1"/>
</dbReference>
<proteinExistence type="inferred from homology"/>
<accession>Q8NWQ3</accession>